<proteinExistence type="inferred from homology"/>
<dbReference type="EMBL" id="DS027690">
    <property type="protein sequence ID" value="EAW21451.1"/>
    <property type="molecule type" value="Genomic_DNA"/>
</dbReference>
<dbReference type="RefSeq" id="XP_001263348.1">
    <property type="nucleotide sequence ID" value="XM_001263347.1"/>
</dbReference>
<dbReference type="SMR" id="A1D6V7"/>
<dbReference type="STRING" id="331117.A1D6V7"/>
<dbReference type="EnsemblFungi" id="EAW21451">
    <property type="protein sequence ID" value="EAW21451"/>
    <property type="gene ID" value="NFIA_066150"/>
</dbReference>
<dbReference type="GeneID" id="4589868"/>
<dbReference type="KEGG" id="nfi:NFIA_066150"/>
<dbReference type="VEuPathDB" id="FungiDB:NFIA_066150"/>
<dbReference type="eggNOG" id="KOG2188">
    <property type="taxonomic scope" value="Eukaryota"/>
</dbReference>
<dbReference type="HOGENOM" id="CLU_008720_1_1_1"/>
<dbReference type="OMA" id="HHLVRNF"/>
<dbReference type="OrthoDB" id="392571at2759"/>
<dbReference type="Proteomes" id="UP000006702">
    <property type="component" value="Unassembled WGS sequence"/>
</dbReference>
<dbReference type="GO" id="GO:0030686">
    <property type="term" value="C:90S preribosome"/>
    <property type="evidence" value="ECO:0007669"/>
    <property type="project" value="TreeGrafter"/>
</dbReference>
<dbReference type="GO" id="GO:0005730">
    <property type="term" value="C:nucleolus"/>
    <property type="evidence" value="ECO:0007669"/>
    <property type="project" value="UniProtKB-SubCell"/>
</dbReference>
<dbReference type="GO" id="GO:0030688">
    <property type="term" value="C:preribosome, small subunit precursor"/>
    <property type="evidence" value="ECO:0007669"/>
    <property type="project" value="TreeGrafter"/>
</dbReference>
<dbReference type="GO" id="GO:0003723">
    <property type="term" value="F:RNA binding"/>
    <property type="evidence" value="ECO:0007669"/>
    <property type="project" value="InterPro"/>
</dbReference>
<dbReference type="GO" id="GO:0000480">
    <property type="term" value="P:endonucleolytic cleavage in 5'-ETS of tricistronic rRNA transcript (SSU-rRNA, 5.8S rRNA, LSU-rRNA)"/>
    <property type="evidence" value="ECO:0007669"/>
    <property type="project" value="TreeGrafter"/>
</dbReference>
<dbReference type="GO" id="GO:0000447">
    <property type="term" value="P:endonucleolytic cleavage in ITS1 to separate SSU-rRNA from 5.8S rRNA and LSU-rRNA from tricistronic rRNA transcript (SSU-rRNA, 5.8S rRNA, LSU-rRNA)"/>
    <property type="evidence" value="ECO:0007669"/>
    <property type="project" value="TreeGrafter"/>
</dbReference>
<dbReference type="GO" id="GO:0000472">
    <property type="term" value="P:endonucleolytic cleavage to generate mature 5'-end of SSU-rRNA from (SSU-rRNA, 5.8S rRNA, LSU-rRNA)"/>
    <property type="evidence" value="ECO:0007669"/>
    <property type="project" value="TreeGrafter"/>
</dbReference>
<dbReference type="GO" id="GO:0000056">
    <property type="term" value="P:ribosomal small subunit export from nucleus"/>
    <property type="evidence" value="ECO:0007669"/>
    <property type="project" value="TreeGrafter"/>
</dbReference>
<dbReference type="Gene3D" id="1.25.10.10">
    <property type="entry name" value="Leucine-rich Repeat Variant"/>
    <property type="match status" value="2"/>
</dbReference>
<dbReference type="InterPro" id="IPR011989">
    <property type="entry name" value="ARM-like"/>
</dbReference>
<dbReference type="InterPro" id="IPR016024">
    <property type="entry name" value="ARM-type_fold"/>
</dbReference>
<dbReference type="InterPro" id="IPR040000">
    <property type="entry name" value="NOP9"/>
</dbReference>
<dbReference type="InterPro" id="IPR001313">
    <property type="entry name" value="Pumilio_RNA-bd_rpt"/>
</dbReference>
<dbReference type="PANTHER" id="PTHR13102">
    <property type="entry name" value="NUCLEOLAR PROTEIN 9"/>
    <property type="match status" value="1"/>
</dbReference>
<dbReference type="PANTHER" id="PTHR13102:SF0">
    <property type="entry name" value="NUCLEOLAR PROTEIN 9"/>
    <property type="match status" value="1"/>
</dbReference>
<dbReference type="Pfam" id="PF22493">
    <property type="entry name" value="PUF_NOP9"/>
    <property type="match status" value="1"/>
</dbReference>
<dbReference type="SMART" id="SM00025">
    <property type="entry name" value="Pumilio"/>
    <property type="match status" value="5"/>
</dbReference>
<dbReference type="SUPFAM" id="SSF48371">
    <property type="entry name" value="ARM repeat"/>
    <property type="match status" value="1"/>
</dbReference>
<protein>
    <recommendedName>
        <fullName>Nucleolar protein 9</fullName>
    </recommendedName>
    <alternativeName>
        <fullName>Pumilio domain-containing protein nop9</fullName>
    </alternativeName>
</protein>
<accession>A1D6V7</accession>
<sequence>MPREKQKRGRRAEDKAKKDAAKRKRDEFPEESAVKRLKPSAETDTSNNEVTSGADYIPLEAEDGGNDVSMNDAPANDMPFYGLLDSEEQEYFSKANEVLELNQFHDAEERRLFVDSVYREADGKELKVACSQSCSRLMEKLISLSDMRQIRRLFNKFIGHFLHLVQHRFASHCCETLFINAAPGVTEKISKSKGRKAEVDEEDEPEPELSLAEMFMKVVEELEGNWGYLLTERFASHTIRVLLLVLAGEPVDLSSTDSVVASRKKERLGIVNTEASEENAVAERRKVPEVFEATLKKVMNDMVSGLDNTYLRALATHPVGNPVLQVLVFLELSHFGKASAKDPNSIIRRLIPDDDFGENAESSTFVRGLLYDPVGSRLLETIIKSMPGKLFKSLYKNIIRDRIGSLARNTTAGYVVLRTLERLGKDDLQDAMELIIPEIPGLIERSRLIVPKVLIERCLVRGVDTKPLSDALESAYDKNPARRLEQMLKLEPAASEEDSEEKQKQTGNNQTAAAEKLHGSLLAQTMLTASGPVSGLIYSSLLAQSAESLLRLAKDPTASRVLQQALTTPTSTSQFRRQFTTRFSGHLVELALDSSGSHVVDALWPATKDLFFVKERMAQELLKEELSLRDSFVGRAVWRNWSMDLYKRRRGEWASKAKGLDSIENGQGERPKSRIDLARAKFAAKAAEESSKAPVAAKT</sequence>
<feature type="chain" id="PRO_0000407819" description="Nucleolar protein 9">
    <location>
        <begin position="1"/>
        <end position="699"/>
    </location>
</feature>
<feature type="repeat" description="Pumilio 1">
    <location>
        <begin position="120"/>
        <end position="155"/>
    </location>
</feature>
<feature type="repeat" description="Pumilio 2">
    <location>
        <begin position="156"/>
        <end position="191"/>
    </location>
</feature>
<feature type="repeat" description="Pumilio 3">
    <location>
        <begin position="361"/>
        <end position="396"/>
    </location>
</feature>
<feature type="repeat" description="Pumilio 4">
    <location>
        <begin position="397"/>
        <end position="433"/>
    </location>
</feature>
<feature type="repeat" description="Pumilio 5">
    <location>
        <begin position="540"/>
        <end position="580"/>
    </location>
</feature>
<feature type="repeat" description="Pumilio 6">
    <location>
        <begin position="582"/>
        <end position="619"/>
    </location>
</feature>
<feature type="region of interest" description="Disordered" evidence="2">
    <location>
        <begin position="1"/>
        <end position="66"/>
    </location>
</feature>
<feature type="region of interest" description="Disordered" evidence="2">
    <location>
        <begin position="492"/>
        <end position="511"/>
    </location>
</feature>
<feature type="compositionally biased region" description="Basic residues" evidence="2">
    <location>
        <begin position="1"/>
        <end position="10"/>
    </location>
</feature>
<feature type="compositionally biased region" description="Basic and acidic residues" evidence="2">
    <location>
        <begin position="11"/>
        <end position="27"/>
    </location>
</feature>
<feature type="compositionally biased region" description="Polar residues" evidence="2">
    <location>
        <begin position="42"/>
        <end position="51"/>
    </location>
</feature>
<organism>
    <name type="scientific">Neosartorya fischeri (strain ATCC 1020 / DSM 3700 / CBS 544.65 / FGSC A1164 / JCM 1740 / NRRL 181 / WB 181)</name>
    <name type="common">Aspergillus fischerianus</name>
    <dbReference type="NCBI Taxonomy" id="331117"/>
    <lineage>
        <taxon>Eukaryota</taxon>
        <taxon>Fungi</taxon>
        <taxon>Dikarya</taxon>
        <taxon>Ascomycota</taxon>
        <taxon>Pezizomycotina</taxon>
        <taxon>Eurotiomycetes</taxon>
        <taxon>Eurotiomycetidae</taxon>
        <taxon>Eurotiales</taxon>
        <taxon>Aspergillaceae</taxon>
        <taxon>Aspergillus</taxon>
        <taxon>Aspergillus subgen. Fumigati</taxon>
    </lineage>
</organism>
<gene>
    <name type="primary">nop9</name>
    <name type="ORF">NFIA_066150</name>
</gene>
<evidence type="ECO:0000250" key="1"/>
<evidence type="ECO:0000256" key="2">
    <source>
        <dbReference type="SAM" id="MobiDB-lite"/>
    </source>
</evidence>
<evidence type="ECO:0000305" key="3"/>
<keyword id="KW-0539">Nucleus</keyword>
<keyword id="KW-1185">Reference proteome</keyword>
<keyword id="KW-0677">Repeat</keyword>
<keyword id="KW-0690">Ribosome biogenesis</keyword>
<keyword id="KW-0698">rRNA processing</keyword>
<comment type="function">
    <text evidence="1">RNA-binding nucleolar protein required for pre-rRNA processing. Involved in production of 18S rRNA and assembly of small ribosomal subunit (By similarity).</text>
</comment>
<comment type="subcellular location">
    <subcellularLocation>
        <location evidence="1">Nucleus</location>
        <location evidence="1">Nucleolus</location>
    </subcellularLocation>
</comment>
<comment type="similarity">
    <text evidence="3">Belongs to the NOP9 family.</text>
</comment>
<reference key="1">
    <citation type="journal article" date="2008" name="PLoS Genet.">
        <title>Genomic islands in the pathogenic filamentous fungus Aspergillus fumigatus.</title>
        <authorList>
            <person name="Fedorova N.D."/>
            <person name="Khaldi N."/>
            <person name="Joardar V.S."/>
            <person name="Maiti R."/>
            <person name="Amedeo P."/>
            <person name="Anderson M.J."/>
            <person name="Crabtree J."/>
            <person name="Silva J.C."/>
            <person name="Badger J.H."/>
            <person name="Albarraq A."/>
            <person name="Angiuoli S."/>
            <person name="Bussey H."/>
            <person name="Bowyer P."/>
            <person name="Cotty P.J."/>
            <person name="Dyer P.S."/>
            <person name="Egan A."/>
            <person name="Galens K."/>
            <person name="Fraser-Liggett C.M."/>
            <person name="Haas B.J."/>
            <person name="Inman J.M."/>
            <person name="Kent R."/>
            <person name="Lemieux S."/>
            <person name="Malavazi I."/>
            <person name="Orvis J."/>
            <person name="Roemer T."/>
            <person name="Ronning C.M."/>
            <person name="Sundaram J.P."/>
            <person name="Sutton G."/>
            <person name="Turner G."/>
            <person name="Venter J.C."/>
            <person name="White O.R."/>
            <person name="Whitty B.R."/>
            <person name="Youngman P."/>
            <person name="Wolfe K.H."/>
            <person name="Goldman G.H."/>
            <person name="Wortman J.R."/>
            <person name="Jiang B."/>
            <person name="Denning D.W."/>
            <person name="Nierman W.C."/>
        </authorList>
    </citation>
    <scope>NUCLEOTIDE SEQUENCE [LARGE SCALE GENOMIC DNA]</scope>
    <source>
        <strain>ATCC 1020 / DSM 3700 / CBS 544.65 / FGSC A1164 / JCM 1740 / NRRL 181 / WB 181</strain>
    </source>
</reference>
<name>NOP9_NEOFI</name>